<sequence>MDIKACYQNAKALLEGHFLLSSGFHSNYYLQSAKVLEDPKLAEQLALELAKQIQEAHLNIECVCSPAIGGILAGYELARALGVRFIFTERVDNTMALRRGFEVKKNEKILVCEDIITTGKSAMECAKVLEEKGAQIVAFGALANRGICKRAHSHLKAQEGACLPSHLPLFALEDFVFDMHKPSSCPLCATSVAIKPGSRGN</sequence>
<organism>
    <name type="scientific">Helicobacter pylori (strain ATCC 700392 / 26695)</name>
    <name type="common">Campylobacter pylori</name>
    <dbReference type="NCBI Taxonomy" id="85962"/>
    <lineage>
        <taxon>Bacteria</taxon>
        <taxon>Pseudomonadati</taxon>
        <taxon>Campylobacterota</taxon>
        <taxon>Epsilonproteobacteria</taxon>
        <taxon>Campylobacterales</taxon>
        <taxon>Helicobacteraceae</taxon>
        <taxon>Helicobacter</taxon>
    </lineage>
</organism>
<accession>P56162</accession>
<evidence type="ECO:0000255" key="1">
    <source>
        <dbReference type="HAMAP-Rule" id="MF_01208"/>
    </source>
</evidence>
<evidence type="ECO:0007829" key="2">
    <source>
        <dbReference type="PDB" id="4PAW"/>
    </source>
</evidence>
<proteinExistence type="evidence at protein level"/>
<protein>
    <recommendedName>
        <fullName evidence="1">Orotate phosphoribosyltransferase</fullName>
        <shortName evidence="1">OPRT</shortName>
        <shortName evidence="1">OPRTase</shortName>
        <ecNumber evidence="1">2.4.2.10</ecNumber>
    </recommendedName>
</protein>
<dbReference type="EC" id="2.4.2.10" evidence="1"/>
<dbReference type="EMBL" id="AE000511">
    <property type="protein sequence ID" value="AAD08303.1"/>
    <property type="molecule type" value="Genomic_DNA"/>
</dbReference>
<dbReference type="PIR" id="A64677">
    <property type="entry name" value="A64677"/>
</dbReference>
<dbReference type="RefSeq" id="NP_208049.1">
    <property type="nucleotide sequence ID" value="NC_000915.1"/>
</dbReference>
<dbReference type="RefSeq" id="WP_000351558.1">
    <property type="nucleotide sequence ID" value="NC_018939.1"/>
</dbReference>
<dbReference type="PDB" id="4PAW">
    <property type="method" value="X-ray"/>
    <property type="resolution" value="2.23 A"/>
    <property type="chains" value="A/B=1-201"/>
</dbReference>
<dbReference type="PDBsum" id="4PAW"/>
<dbReference type="SMR" id="P56162"/>
<dbReference type="IntAct" id="P56162">
    <property type="interactions" value="3"/>
</dbReference>
<dbReference type="STRING" id="85962.HP_1257"/>
<dbReference type="PaxDb" id="85962-C694_06495"/>
<dbReference type="EnsemblBacteria" id="AAD08303">
    <property type="protein sequence ID" value="AAD08303"/>
    <property type="gene ID" value="HP_1257"/>
</dbReference>
<dbReference type="KEGG" id="heo:C694_06495"/>
<dbReference type="KEGG" id="hpy:HP_1257"/>
<dbReference type="PATRIC" id="fig|85962.47.peg.1349"/>
<dbReference type="eggNOG" id="COG0461">
    <property type="taxonomic scope" value="Bacteria"/>
</dbReference>
<dbReference type="InParanoid" id="P56162"/>
<dbReference type="OrthoDB" id="9783570at2"/>
<dbReference type="PhylomeDB" id="P56162"/>
<dbReference type="UniPathway" id="UPA00070">
    <property type="reaction ID" value="UER00119"/>
</dbReference>
<dbReference type="EvolutionaryTrace" id="P56162"/>
<dbReference type="Proteomes" id="UP000000429">
    <property type="component" value="Chromosome"/>
</dbReference>
<dbReference type="GO" id="GO:0000287">
    <property type="term" value="F:magnesium ion binding"/>
    <property type="evidence" value="ECO:0007669"/>
    <property type="project" value="UniProtKB-UniRule"/>
</dbReference>
<dbReference type="GO" id="GO:0004588">
    <property type="term" value="F:orotate phosphoribosyltransferase activity"/>
    <property type="evidence" value="ECO:0000318"/>
    <property type="project" value="GO_Central"/>
</dbReference>
<dbReference type="GO" id="GO:0044205">
    <property type="term" value="P:'de novo' UMP biosynthetic process"/>
    <property type="evidence" value="ECO:0007669"/>
    <property type="project" value="UniProtKB-UniRule"/>
</dbReference>
<dbReference type="GO" id="GO:0019856">
    <property type="term" value="P:pyrimidine nucleobase biosynthetic process"/>
    <property type="evidence" value="ECO:0000318"/>
    <property type="project" value="GO_Central"/>
</dbReference>
<dbReference type="GO" id="GO:0006222">
    <property type="term" value="P:UMP biosynthetic process"/>
    <property type="evidence" value="ECO:0000318"/>
    <property type="project" value="GO_Central"/>
</dbReference>
<dbReference type="CDD" id="cd06223">
    <property type="entry name" value="PRTases_typeI"/>
    <property type="match status" value="1"/>
</dbReference>
<dbReference type="Gene3D" id="3.40.50.2020">
    <property type="match status" value="1"/>
</dbReference>
<dbReference type="HAMAP" id="MF_01208">
    <property type="entry name" value="PyrE"/>
    <property type="match status" value="1"/>
</dbReference>
<dbReference type="InterPro" id="IPR023031">
    <property type="entry name" value="OPRT"/>
</dbReference>
<dbReference type="InterPro" id="IPR006273">
    <property type="entry name" value="Orotate_PRibTrfase_bac"/>
</dbReference>
<dbReference type="InterPro" id="IPR000836">
    <property type="entry name" value="PRibTrfase_dom"/>
</dbReference>
<dbReference type="InterPro" id="IPR029057">
    <property type="entry name" value="PRTase-like"/>
</dbReference>
<dbReference type="NCBIfam" id="TIGR01367">
    <property type="entry name" value="pyrE_Therm"/>
    <property type="match status" value="1"/>
</dbReference>
<dbReference type="PANTHER" id="PTHR19278">
    <property type="entry name" value="OROTATE PHOSPHORIBOSYLTRANSFERASE"/>
    <property type="match status" value="1"/>
</dbReference>
<dbReference type="PANTHER" id="PTHR19278:SF9">
    <property type="entry name" value="URIDINE 5'-MONOPHOSPHATE SYNTHASE"/>
    <property type="match status" value="1"/>
</dbReference>
<dbReference type="Pfam" id="PF00156">
    <property type="entry name" value="Pribosyltran"/>
    <property type="match status" value="1"/>
</dbReference>
<dbReference type="SUPFAM" id="SSF53271">
    <property type="entry name" value="PRTase-like"/>
    <property type="match status" value="1"/>
</dbReference>
<dbReference type="PROSITE" id="PS00103">
    <property type="entry name" value="PUR_PYR_PR_TRANSFER"/>
    <property type="match status" value="1"/>
</dbReference>
<feature type="chain" id="PRO_0000110701" description="Orotate phosphoribosyltransferase">
    <location>
        <begin position="1"/>
        <end position="201"/>
    </location>
</feature>
<feature type="binding site" evidence="1">
    <location>
        <begin position="113"/>
        <end position="121"/>
    </location>
    <ligand>
        <name>5-phospho-alpha-D-ribose 1-diphosphate</name>
        <dbReference type="ChEBI" id="CHEBI:58017"/>
    </ligand>
</feature>
<feature type="binding site" evidence="1">
    <location>
        <position position="117"/>
    </location>
    <ligand>
        <name>orotate</name>
        <dbReference type="ChEBI" id="CHEBI:30839"/>
    </ligand>
</feature>
<feature type="binding site" evidence="1">
    <location>
        <position position="145"/>
    </location>
    <ligand>
        <name>orotate</name>
        <dbReference type="ChEBI" id="CHEBI:30839"/>
    </ligand>
</feature>
<feature type="helix" evidence="2">
    <location>
        <begin position="3"/>
        <end position="9"/>
    </location>
</feature>
<feature type="strand" evidence="2">
    <location>
        <begin position="13"/>
        <end position="19"/>
    </location>
</feature>
<feature type="strand" evidence="2">
    <location>
        <begin position="25"/>
        <end position="30"/>
    </location>
</feature>
<feature type="helix" evidence="2">
    <location>
        <begin position="33"/>
        <end position="36"/>
    </location>
</feature>
<feature type="helix" evidence="2">
    <location>
        <begin position="39"/>
        <end position="55"/>
    </location>
</feature>
<feature type="strand" evidence="2">
    <location>
        <begin position="62"/>
        <end position="66"/>
    </location>
</feature>
<feature type="turn" evidence="2">
    <location>
        <begin position="67"/>
        <end position="70"/>
    </location>
</feature>
<feature type="helix" evidence="2">
    <location>
        <begin position="71"/>
        <end position="81"/>
    </location>
</feature>
<feature type="strand" evidence="2">
    <location>
        <begin position="84"/>
        <end position="91"/>
    </location>
</feature>
<feature type="strand" evidence="2">
    <location>
        <begin position="94"/>
        <end position="96"/>
    </location>
</feature>
<feature type="strand" evidence="2">
    <location>
        <begin position="108"/>
        <end position="119"/>
    </location>
</feature>
<feature type="helix" evidence="2">
    <location>
        <begin position="120"/>
        <end position="131"/>
    </location>
</feature>
<feature type="strand" evidence="2">
    <location>
        <begin position="135"/>
        <end position="144"/>
    </location>
</feature>
<feature type="strand" evidence="2">
    <location>
        <begin position="146"/>
        <end position="148"/>
    </location>
</feature>
<feature type="strand" evidence="2">
    <location>
        <begin position="169"/>
        <end position="174"/>
    </location>
</feature>
<feature type="helix" evidence="2">
    <location>
        <begin position="182"/>
        <end position="184"/>
    </location>
</feature>
<feature type="helix" evidence="2">
    <location>
        <begin position="186"/>
        <end position="189"/>
    </location>
</feature>
<gene>
    <name evidence="1" type="primary">pyrE</name>
    <name type="ordered locus">HP_1257</name>
</gene>
<reference key="1">
    <citation type="journal article" date="1997" name="Nature">
        <title>The complete genome sequence of the gastric pathogen Helicobacter pylori.</title>
        <authorList>
            <person name="Tomb J.-F."/>
            <person name="White O."/>
            <person name="Kerlavage A.R."/>
            <person name="Clayton R.A."/>
            <person name="Sutton G.G."/>
            <person name="Fleischmann R.D."/>
            <person name="Ketchum K.A."/>
            <person name="Klenk H.-P."/>
            <person name="Gill S.R."/>
            <person name="Dougherty B.A."/>
            <person name="Nelson K.E."/>
            <person name="Quackenbush J."/>
            <person name="Zhou L."/>
            <person name="Kirkness E.F."/>
            <person name="Peterson S.N."/>
            <person name="Loftus B.J."/>
            <person name="Richardson D.L."/>
            <person name="Dodson R.J."/>
            <person name="Khalak H.G."/>
            <person name="Glodek A."/>
            <person name="McKenney K."/>
            <person name="FitzGerald L.M."/>
            <person name="Lee N."/>
            <person name="Adams M.D."/>
            <person name="Hickey E.K."/>
            <person name="Berg D.E."/>
            <person name="Gocayne J.D."/>
            <person name="Utterback T.R."/>
            <person name="Peterson J.D."/>
            <person name="Kelley J.M."/>
            <person name="Cotton M.D."/>
            <person name="Weidman J.F."/>
            <person name="Fujii C."/>
            <person name="Bowman C."/>
            <person name="Watthey L."/>
            <person name="Wallin E."/>
            <person name="Hayes W.S."/>
            <person name="Borodovsky M."/>
            <person name="Karp P.D."/>
            <person name="Smith H.O."/>
            <person name="Fraser C.M."/>
            <person name="Venter J.C."/>
        </authorList>
    </citation>
    <scope>NUCLEOTIDE SEQUENCE [LARGE SCALE GENOMIC DNA]</scope>
    <source>
        <strain>ATCC 700392 / 26695</strain>
    </source>
</reference>
<reference key="2">
    <citation type="journal article" date="2003" name="Mol. Cells">
        <title>Crystallization and preliminary X-ray crystallographic analysis of orotate phosphoribosyltransferase from Helicobacter pylori.</title>
        <authorList>
            <person name="Kim M.-K."/>
            <person name="Song H.-E."/>
            <person name="Kim Y.S."/>
            <person name="Rho S.-H."/>
            <person name="Im Y.J."/>
            <person name="Lee J.H."/>
            <person name="Kang G.B."/>
            <person name="Eom S.H."/>
        </authorList>
    </citation>
    <scope>CRYSTALLIZATION</scope>
</reference>
<name>PYRE_HELPY</name>
<keyword id="KW-0002">3D-structure</keyword>
<keyword id="KW-0328">Glycosyltransferase</keyword>
<keyword id="KW-0460">Magnesium</keyword>
<keyword id="KW-0665">Pyrimidine biosynthesis</keyword>
<keyword id="KW-1185">Reference proteome</keyword>
<keyword id="KW-0808">Transferase</keyword>
<comment type="function">
    <text evidence="1">Catalyzes the transfer of a ribosyl phosphate group from 5-phosphoribose 1-diphosphate to orotate, leading to the formation of orotidine monophosphate (OMP).</text>
</comment>
<comment type="catalytic activity">
    <reaction evidence="1">
        <text>orotidine 5'-phosphate + diphosphate = orotate + 5-phospho-alpha-D-ribose 1-diphosphate</text>
        <dbReference type="Rhea" id="RHEA:10380"/>
        <dbReference type="ChEBI" id="CHEBI:30839"/>
        <dbReference type="ChEBI" id="CHEBI:33019"/>
        <dbReference type="ChEBI" id="CHEBI:57538"/>
        <dbReference type="ChEBI" id="CHEBI:58017"/>
        <dbReference type="EC" id="2.4.2.10"/>
    </reaction>
</comment>
<comment type="cofactor">
    <cofactor evidence="1">
        <name>Mg(2+)</name>
        <dbReference type="ChEBI" id="CHEBI:18420"/>
    </cofactor>
</comment>
<comment type="pathway">
    <text evidence="1">Pyrimidine metabolism; UMP biosynthesis via de novo pathway; UMP from orotate: step 1/2.</text>
</comment>
<comment type="subunit">
    <text evidence="1">Homodimer.</text>
</comment>
<comment type="similarity">
    <text evidence="1">Belongs to the purine/pyrimidine phosphoribosyltransferase family. PyrE subfamily.</text>
</comment>